<organism>
    <name type="scientific">Arabidopsis thaliana</name>
    <name type="common">Mouse-ear cress</name>
    <dbReference type="NCBI Taxonomy" id="3702"/>
    <lineage>
        <taxon>Eukaryota</taxon>
        <taxon>Viridiplantae</taxon>
        <taxon>Streptophyta</taxon>
        <taxon>Embryophyta</taxon>
        <taxon>Tracheophyta</taxon>
        <taxon>Spermatophyta</taxon>
        <taxon>Magnoliopsida</taxon>
        <taxon>eudicotyledons</taxon>
        <taxon>Gunneridae</taxon>
        <taxon>Pentapetalae</taxon>
        <taxon>rosids</taxon>
        <taxon>malvids</taxon>
        <taxon>Brassicales</taxon>
        <taxon>Brassicaceae</taxon>
        <taxon>Camelineae</taxon>
        <taxon>Arabidopsis</taxon>
    </lineage>
</organism>
<proteinExistence type="inferred from homology"/>
<sequence>MESKRSSSSPLLILITTIMIIFIISGPKSVDADCKHPVGPYTDSCFTDCVSGKYGYNYESAFCSRDETGTCKICCCELINE</sequence>
<evidence type="ECO:0000250" key="1"/>
<evidence type="ECO:0000255" key="2"/>
<evidence type="ECO:0000305" key="3"/>
<name>DF313_ARATH</name>
<protein>
    <recommendedName>
        <fullName>Defensin-like protein 313</fullName>
    </recommendedName>
</protein>
<reference key="1">
    <citation type="journal article" date="1998" name="DNA Res.">
        <title>Structural analysis of Arabidopsis thaliana chromosome 5. V. Sequence features of the regions of 1,381,565 bp covered by twenty one physically assigned P1 and TAC clones.</title>
        <authorList>
            <person name="Kaneko T."/>
            <person name="Kotani H."/>
            <person name="Nakamura Y."/>
            <person name="Sato S."/>
            <person name="Asamizu E."/>
            <person name="Miyajima N."/>
            <person name="Tabata S."/>
        </authorList>
    </citation>
    <scope>NUCLEOTIDE SEQUENCE [LARGE SCALE GENOMIC DNA]</scope>
    <source>
        <strain>cv. Columbia</strain>
    </source>
</reference>
<reference key="2">
    <citation type="journal article" date="2017" name="Plant J.">
        <title>Araport11: a complete reannotation of the Arabidopsis thaliana reference genome.</title>
        <authorList>
            <person name="Cheng C.Y."/>
            <person name="Krishnakumar V."/>
            <person name="Chan A.P."/>
            <person name="Thibaud-Nissen F."/>
            <person name="Schobel S."/>
            <person name="Town C.D."/>
        </authorList>
    </citation>
    <scope>GENOME REANNOTATION</scope>
    <source>
        <strain>cv. Columbia</strain>
    </source>
</reference>
<reference key="3">
    <citation type="submission" date="2002-03" db="EMBL/GenBank/DDBJ databases">
        <title>Full-length cDNA from Arabidopsis thaliana.</title>
        <authorList>
            <person name="Brover V.V."/>
            <person name="Troukhan M.E."/>
            <person name="Alexandrov N.A."/>
            <person name="Lu Y.-P."/>
            <person name="Flavell R.B."/>
            <person name="Feldmann K.A."/>
        </authorList>
    </citation>
    <scope>NUCLEOTIDE SEQUENCE [LARGE SCALE MRNA]</scope>
</reference>
<reference key="4">
    <citation type="journal article" date="2006" name="Plant Biotechnol. J.">
        <title>Simultaneous high-throughput recombinational cloning of open reading frames in closed and open configurations.</title>
        <authorList>
            <person name="Underwood B.A."/>
            <person name="Vanderhaeghen R."/>
            <person name="Whitford R."/>
            <person name="Town C.D."/>
            <person name="Hilson P."/>
        </authorList>
    </citation>
    <scope>NUCLEOTIDE SEQUENCE [LARGE SCALE MRNA] OF 32-81</scope>
    <source>
        <strain>cv. Columbia</strain>
    </source>
</reference>
<reference key="5">
    <citation type="journal article" date="2005" name="Plant Physiol.">
        <title>Genome organization of more than 300 defensin-like genes in Arabidopsis.</title>
        <authorList>
            <person name="Silverstein K.A.T."/>
            <person name="Graham M.A."/>
            <person name="Paape T.D."/>
            <person name="VandenBosch K.A."/>
        </authorList>
    </citation>
    <scope>GENE FAMILY</scope>
</reference>
<feature type="signal peptide" evidence="2">
    <location>
        <begin position="1"/>
        <end position="32"/>
    </location>
</feature>
<feature type="chain" id="PRO_0000379769" description="Defensin-like protein 313">
    <location>
        <begin position="33"/>
        <end position="81"/>
    </location>
</feature>
<feature type="disulfide bond" evidence="1">
    <location>
        <begin position="34"/>
        <end position="63"/>
    </location>
</feature>
<feature type="disulfide bond" evidence="1">
    <location>
        <begin position="45"/>
        <end position="74"/>
    </location>
</feature>
<feature type="disulfide bond" evidence="1">
    <location>
        <begin position="49"/>
        <end position="76"/>
    </location>
</feature>
<accession>Q3E8K0</accession>
<accession>Q1PDQ0</accession>
<dbReference type="EMBL" id="AB010699">
    <property type="status" value="NOT_ANNOTATED_CDS"/>
    <property type="molecule type" value="Genomic_DNA"/>
</dbReference>
<dbReference type="EMBL" id="CP002688">
    <property type="protein sequence ID" value="AED94514.1"/>
    <property type="molecule type" value="Genomic_DNA"/>
</dbReference>
<dbReference type="EMBL" id="AY088976">
    <property type="status" value="NOT_ANNOTATED_CDS"/>
    <property type="molecule type" value="mRNA"/>
</dbReference>
<dbReference type="EMBL" id="DQ447018">
    <property type="protein sequence ID" value="ABE66205.1"/>
    <property type="status" value="ALT_SEQ"/>
    <property type="molecule type" value="mRNA"/>
</dbReference>
<dbReference type="RefSeq" id="NP_568576.2">
    <property type="nucleotide sequence ID" value="NM_123379.3"/>
</dbReference>
<dbReference type="STRING" id="3702.Q3E8K0"/>
<dbReference type="PaxDb" id="3702-AT5G40155.1"/>
<dbReference type="ProteomicsDB" id="224094"/>
<dbReference type="EnsemblPlants" id="AT5G40155.1">
    <property type="protein sequence ID" value="AT5G40155.1"/>
    <property type="gene ID" value="AT5G40155"/>
</dbReference>
<dbReference type="GeneID" id="834013"/>
<dbReference type="Gramene" id="AT5G40155.1">
    <property type="protein sequence ID" value="AT5G40155.1"/>
    <property type="gene ID" value="AT5G40155"/>
</dbReference>
<dbReference type="KEGG" id="ath:AT5G40155"/>
<dbReference type="Araport" id="AT5G40155"/>
<dbReference type="TAIR" id="AT5G40155"/>
<dbReference type="HOGENOM" id="CLU_2577146_0_0_1"/>
<dbReference type="InParanoid" id="Q3E8K0"/>
<dbReference type="OMA" id="CKHPVGP"/>
<dbReference type="OrthoDB" id="1093733at2759"/>
<dbReference type="PRO" id="PR:Q3E8K0"/>
<dbReference type="Proteomes" id="UP000006548">
    <property type="component" value="Chromosome 5"/>
</dbReference>
<dbReference type="ExpressionAtlas" id="Q3E8K0">
    <property type="expression patterns" value="baseline and differential"/>
</dbReference>
<dbReference type="GO" id="GO:0005576">
    <property type="term" value="C:extracellular region"/>
    <property type="evidence" value="ECO:0007669"/>
    <property type="project" value="UniProtKB-SubCell"/>
</dbReference>
<dbReference type="GO" id="GO:0050832">
    <property type="term" value="P:defense response to fungus"/>
    <property type="evidence" value="ECO:0007669"/>
    <property type="project" value="UniProtKB-KW"/>
</dbReference>
<dbReference type="GO" id="GO:0031640">
    <property type="term" value="P:killing of cells of another organism"/>
    <property type="evidence" value="ECO:0007669"/>
    <property type="project" value="UniProtKB-KW"/>
</dbReference>
<keyword id="KW-0929">Antimicrobial</keyword>
<keyword id="KW-1015">Disulfide bond</keyword>
<keyword id="KW-0295">Fungicide</keyword>
<keyword id="KW-0611">Plant defense</keyword>
<keyword id="KW-1185">Reference proteome</keyword>
<keyword id="KW-0964">Secreted</keyword>
<keyword id="KW-0732">Signal</keyword>
<gene>
    <name type="ordered locus">At5g40155</name>
    <name type="ORF">MSN9</name>
</gene>
<comment type="subcellular location">
    <subcellularLocation>
        <location evidence="1">Secreted</location>
    </subcellularLocation>
</comment>
<comment type="similarity">
    <text evidence="3">Belongs to the DEFL family.</text>
</comment>
<comment type="caution">
    <text evidence="3">Lacks 1 of the 4 disulfide bonds, which are conserved features of the family.</text>
</comment>
<comment type="sequence caution" evidence="3">
    <conflict type="erroneous translation">
        <sequence resource="EMBL-CDS" id="ABE66205"/>
    </conflict>
    <text>Wrong choice of frame.</text>
</comment>